<keyword id="KW-0002">3D-structure</keyword>
<keyword id="KW-0067">ATP-binding</keyword>
<keyword id="KW-1003">Cell membrane</keyword>
<keyword id="KW-0418">Kinase</keyword>
<keyword id="KW-0472">Membrane</keyword>
<keyword id="KW-0479">Metal-binding</keyword>
<keyword id="KW-0547">Nucleotide-binding</keyword>
<keyword id="KW-0597">Phosphoprotein</keyword>
<keyword id="KW-0808">Transferase</keyword>
<keyword id="KW-0902">Two-component regulatory system</keyword>
<keyword id="KW-0862">Zinc</keyword>
<dbReference type="EC" id="2.7.13.3" evidence="9"/>
<dbReference type="EMBL" id="AJ012052">
    <property type="protein sequence ID" value="CAB65401.1"/>
    <property type="molecule type" value="Genomic_DNA"/>
</dbReference>
<dbReference type="PDB" id="4MN5">
    <property type="method" value="X-ray"/>
    <property type="resolution" value="2.00 A"/>
    <property type="chains" value="A/B=58-183"/>
</dbReference>
<dbReference type="PDB" id="4MN6">
    <property type="method" value="X-ray"/>
    <property type="resolution" value="2.10 A"/>
    <property type="chains" value="A/B=73-177"/>
</dbReference>
<dbReference type="PDB" id="4YWZ">
    <property type="method" value="X-ray"/>
    <property type="resolution" value="1.70 A"/>
    <property type="chains" value="A/B=34-182"/>
</dbReference>
<dbReference type="PDB" id="7DUC">
    <property type="method" value="X-ray"/>
    <property type="resolution" value="2.56 A"/>
    <property type="chains" value="A/B=58-183"/>
</dbReference>
<dbReference type="PDBsum" id="4MN5"/>
<dbReference type="PDBsum" id="4MN6"/>
<dbReference type="PDBsum" id="4YWZ"/>
<dbReference type="PDBsum" id="7DUC"/>
<dbReference type="SMR" id="Q9RDT3"/>
<dbReference type="BindingDB" id="Q9RDT3"/>
<dbReference type="ChEMBL" id="CHEMBL4295968"/>
<dbReference type="BRENDA" id="2.7.13.3">
    <property type="organism ID" value="3352"/>
</dbReference>
<dbReference type="EvolutionaryTrace" id="Q9RDT3"/>
<dbReference type="GO" id="GO:0005886">
    <property type="term" value="C:plasma membrane"/>
    <property type="evidence" value="ECO:0007669"/>
    <property type="project" value="UniProtKB-SubCell"/>
</dbReference>
<dbReference type="GO" id="GO:0005524">
    <property type="term" value="F:ATP binding"/>
    <property type="evidence" value="ECO:0007669"/>
    <property type="project" value="UniProtKB-KW"/>
</dbReference>
<dbReference type="GO" id="GO:0046872">
    <property type="term" value="F:metal ion binding"/>
    <property type="evidence" value="ECO:0007669"/>
    <property type="project" value="UniProtKB-KW"/>
</dbReference>
<dbReference type="GO" id="GO:0004721">
    <property type="term" value="F:phosphoprotein phosphatase activity"/>
    <property type="evidence" value="ECO:0007669"/>
    <property type="project" value="TreeGrafter"/>
</dbReference>
<dbReference type="GO" id="GO:0000155">
    <property type="term" value="F:phosphorelay sensor kinase activity"/>
    <property type="evidence" value="ECO:0007669"/>
    <property type="project" value="InterPro"/>
</dbReference>
<dbReference type="GO" id="GO:0016036">
    <property type="term" value="P:cellular response to phosphate starvation"/>
    <property type="evidence" value="ECO:0007669"/>
    <property type="project" value="TreeGrafter"/>
</dbReference>
<dbReference type="CDD" id="cd06225">
    <property type="entry name" value="HAMP"/>
    <property type="match status" value="1"/>
</dbReference>
<dbReference type="CDD" id="cd00075">
    <property type="entry name" value="HATPase"/>
    <property type="match status" value="1"/>
</dbReference>
<dbReference type="CDD" id="cd00082">
    <property type="entry name" value="HisKA"/>
    <property type="match status" value="1"/>
</dbReference>
<dbReference type="CDD" id="cd00130">
    <property type="entry name" value="PAS"/>
    <property type="match status" value="1"/>
</dbReference>
<dbReference type="FunFam" id="1.10.8.500:FF:000001">
    <property type="entry name" value="Cell wall metabolism sensor histidine kinase"/>
    <property type="match status" value="1"/>
</dbReference>
<dbReference type="FunFam" id="3.30.450.20:FF:000037">
    <property type="entry name" value="Cell wall metabolism sensor histidine kinase"/>
    <property type="match status" value="1"/>
</dbReference>
<dbReference type="FunFam" id="3.30.565.10:FF:000006">
    <property type="entry name" value="Sensor histidine kinase WalK"/>
    <property type="match status" value="1"/>
</dbReference>
<dbReference type="FunFam" id="1.10.287.130:FF:000001">
    <property type="entry name" value="Two-component sensor histidine kinase"/>
    <property type="match status" value="1"/>
</dbReference>
<dbReference type="Gene3D" id="1.10.287.130">
    <property type="match status" value="1"/>
</dbReference>
<dbReference type="Gene3D" id="1.10.8.500">
    <property type="entry name" value="HAMP domain in histidine kinase"/>
    <property type="match status" value="1"/>
</dbReference>
<dbReference type="Gene3D" id="3.30.565.10">
    <property type="entry name" value="Histidine kinase-like ATPase, C-terminal domain"/>
    <property type="match status" value="1"/>
</dbReference>
<dbReference type="Gene3D" id="3.30.450.20">
    <property type="entry name" value="PAS domain"/>
    <property type="match status" value="1"/>
</dbReference>
<dbReference type="InterPro" id="IPR050351">
    <property type="entry name" value="2-comp_sensor_kinase"/>
</dbReference>
<dbReference type="InterPro" id="IPR003660">
    <property type="entry name" value="HAMP_dom"/>
</dbReference>
<dbReference type="InterPro" id="IPR036890">
    <property type="entry name" value="HATPase_C_sf"/>
</dbReference>
<dbReference type="InterPro" id="IPR005467">
    <property type="entry name" value="His_kinase_dom"/>
</dbReference>
<dbReference type="InterPro" id="IPR003661">
    <property type="entry name" value="HisK_dim/P_dom"/>
</dbReference>
<dbReference type="InterPro" id="IPR036097">
    <property type="entry name" value="HisK_dim/P_sf"/>
</dbReference>
<dbReference type="InterPro" id="IPR000014">
    <property type="entry name" value="PAS"/>
</dbReference>
<dbReference type="InterPro" id="IPR000700">
    <property type="entry name" value="PAS-assoc_C"/>
</dbReference>
<dbReference type="InterPro" id="IPR035965">
    <property type="entry name" value="PAS-like_dom_sf"/>
</dbReference>
<dbReference type="InterPro" id="IPR004358">
    <property type="entry name" value="Sig_transdc_His_kin-like_C"/>
</dbReference>
<dbReference type="NCBIfam" id="TIGR00229">
    <property type="entry name" value="sensory_box"/>
    <property type="match status" value="1"/>
</dbReference>
<dbReference type="PANTHER" id="PTHR45453">
    <property type="entry name" value="PHOSPHATE REGULON SENSOR PROTEIN PHOR"/>
    <property type="match status" value="1"/>
</dbReference>
<dbReference type="PANTHER" id="PTHR45453:SF1">
    <property type="entry name" value="PHOSPHATE REGULON SENSOR PROTEIN PHOR"/>
    <property type="match status" value="1"/>
</dbReference>
<dbReference type="Pfam" id="PF00672">
    <property type="entry name" value="HAMP"/>
    <property type="match status" value="1"/>
</dbReference>
<dbReference type="Pfam" id="PF02518">
    <property type="entry name" value="HATPase_c"/>
    <property type="match status" value="1"/>
</dbReference>
<dbReference type="Pfam" id="PF00512">
    <property type="entry name" value="HisKA"/>
    <property type="match status" value="1"/>
</dbReference>
<dbReference type="Pfam" id="PF13426">
    <property type="entry name" value="PAS_9"/>
    <property type="match status" value="1"/>
</dbReference>
<dbReference type="PRINTS" id="PR00344">
    <property type="entry name" value="BCTRLSENSOR"/>
</dbReference>
<dbReference type="SMART" id="SM00304">
    <property type="entry name" value="HAMP"/>
    <property type="match status" value="1"/>
</dbReference>
<dbReference type="SMART" id="SM00387">
    <property type="entry name" value="HATPase_c"/>
    <property type="match status" value="1"/>
</dbReference>
<dbReference type="SMART" id="SM00388">
    <property type="entry name" value="HisKA"/>
    <property type="match status" value="1"/>
</dbReference>
<dbReference type="SMART" id="SM00091">
    <property type="entry name" value="PAS"/>
    <property type="match status" value="1"/>
</dbReference>
<dbReference type="SUPFAM" id="SSF55874">
    <property type="entry name" value="ATPase domain of HSP90 chaperone/DNA topoisomerase II/histidine kinase"/>
    <property type="match status" value="1"/>
</dbReference>
<dbReference type="SUPFAM" id="SSF158472">
    <property type="entry name" value="HAMP domain-like"/>
    <property type="match status" value="1"/>
</dbReference>
<dbReference type="SUPFAM" id="SSF47384">
    <property type="entry name" value="Homodimeric domain of signal transducing histidine kinase"/>
    <property type="match status" value="1"/>
</dbReference>
<dbReference type="SUPFAM" id="SSF55785">
    <property type="entry name" value="PYP-like sensor domain (PAS domain)"/>
    <property type="match status" value="1"/>
</dbReference>
<dbReference type="PROSITE" id="PS50885">
    <property type="entry name" value="HAMP"/>
    <property type="match status" value="1"/>
</dbReference>
<dbReference type="PROSITE" id="PS50109">
    <property type="entry name" value="HIS_KIN"/>
    <property type="match status" value="1"/>
</dbReference>
<dbReference type="PROSITE" id="PS50113">
    <property type="entry name" value="PAC"/>
    <property type="match status" value="1"/>
</dbReference>
<dbReference type="PROSITE" id="PS50112">
    <property type="entry name" value="PAS"/>
    <property type="match status" value="1"/>
</dbReference>
<name>WALK_STAAU</name>
<sequence>CTVILGFFIARTITKPITDMRNQTVEMSRGNYTQRVKIYGNDEIGELALAFNNLSKRVQEAQANTESEKRRLDSVITHMSDGIIATDRRGRIRIVNDMALKMLGMAKEDIIGYYMLSVLSLEDEFKLEEIQENNDSFLLDLNEEEGLIARVNFSTIVQETGFVTGYIAVLHDVTEQQQVERERREFVANVSHELRTPLTSMNSYIEALEEGAWKDEELAPQFLSVTREETERMIRLVNDLLQLSKMDNESDQINKEIIDFNMFINKIINRHEMSAKDTTFIRDIPKKTIFTEFDPDKMTQVFDNVITNAMKYSRGDKRVEFHVKQNPLYNRMTIRIKDNGIGIPINKVDKIFDRFYRVDKARTRKMGGTGLGLAISKEIVEAHNGRIWANSVEGQGTSIFITLPCEVIEDGDWDE</sequence>
<accession>Q9RDT3</accession>
<organism>
    <name type="scientific">Staphylococcus aureus</name>
    <dbReference type="NCBI Taxonomy" id="1280"/>
    <lineage>
        <taxon>Bacteria</taxon>
        <taxon>Bacillati</taxon>
        <taxon>Bacillota</taxon>
        <taxon>Bacilli</taxon>
        <taxon>Bacillales</taxon>
        <taxon>Staphylococcaceae</taxon>
        <taxon>Staphylococcus</taxon>
    </lineage>
</organism>
<comment type="function">
    <text evidence="9">Member of the two-component regulatory system WalK/WalR that regulates genes involved in cell wall metabolism, virulence regulation, biofilm production, oxidative stress resistance and antibiotic resistance via direct or indirect regulation of autolysins. Functions as a sensor protein kinase which is autophosphorylated at a histidine residue in the dimerization domain and transfers its phosphate group to the conserved aspartic acid residue in the regulatory domain of WalR. In turn, WalR binds to the upstream promoter regions of the target genes to positively and negatively regulate their expression.</text>
</comment>
<comment type="catalytic activity">
    <reaction evidence="9">
        <text>ATP + protein L-histidine = ADP + protein N-phospho-L-histidine.</text>
        <dbReference type="EC" id="2.7.13.3"/>
    </reaction>
</comment>
<comment type="cofactor">
    <cofactor evidence="7">
        <name>NH4(+)</name>
        <dbReference type="ChEBI" id="CHEBI:28938"/>
    </cofactor>
</comment>
<comment type="activity regulation">
    <text evidence="9">By zinc. Zinc-binding negatively regulates WalK kinase activity and thus autophosphorylation.</text>
</comment>
<comment type="biophysicochemical properties">
    <kinetics>
        <KM evidence="7">130 uM for ATP</KM>
        <text>Kinetic parameters were determined with a truncated form of WalK, which includes only the cytoplasmic domain and not the sensor domain and the transmembrane region.</text>
    </kinetics>
    <phDependence>
        <text evidence="7">Optimum pH is 8.5.</text>
    </phDependence>
</comment>
<comment type="subunit">
    <text evidence="1">Forms homodimers. Forms homooligomers.</text>
</comment>
<comment type="subcellular location">
    <subcellularLocation>
        <location evidence="11">Cell membrane</location>
        <topology evidence="2">Multi-pass membrane protein</topology>
    </subcellularLocation>
</comment>
<comment type="PTM">
    <text evidence="7 9">Autophosphorylated.</text>
</comment>
<comment type="miscellaneous">
    <text evidence="8">Overexpression of walK/walR reduces susceptibility against vancomycin.</text>
</comment>
<feature type="chain" id="PRO_0000353050" description="Sensor protein kinase WalK">
    <location>
        <begin position="1" status="less than"/>
        <end position="415"/>
    </location>
</feature>
<feature type="domain" description="HAMP" evidence="3">
    <location>
        <begin position="11"/>
        <end position="63"/>
    </location>
</feature>
<feature type="domain" description="PAS" evidence="5">
    <location>
        <begin position="68"/>
        <end position="138"/>
    </location>
</feature>
<feature type="domain" description="PAC" evidence="6">
    <location>
        <begin position="121"/>
        <end position="185"/>
    </location>
</feature>
<feature type="domain" description="Histidine kinase" evidence="4">
    <location>
        <begin position="189"/>
        <end position="407"/>
    </location>
</feature>
<feature type="binding site" evidence="9 10 12 13">
    <location>
        <position position="78"/>
    </location>
    <ligand>
        <name>Zn(2+)</name>
        <dbReference type="ChEBI" id="CHEBI:29105"/>
    </ligand>
</feature>
<feature type="binding site" evidence="9 10 12 13">
    <location>
        <position position="81"/>
    </location>
    <ligand>
        <name>Zn(2+)</name>
        <dbReference type="ChEBI" id="CHEBI:29105"/>
    </ligand>
</feature>
<feature type="binding site" evidence="9 10 12 13">
    <location>
        <position position="171"/>
    </location>
    <ligand>
        <name>Zn(2+)</name>
        <dbReference type="ChEBI" id="CHEBI:29105"/>
    </ligand>
</feature>
<feature type="binding site" evidence="9 10 12 13">
    <location>
        <position position="175"/>
    </location>
    <ligand>
        <name>Zn(2+)</name>
        <dbReference type="ChEBI" id="CHEBI:29105"/>
    </ligand>
</feature>
<feature type="modified residue" description="Phosphohistidine; by autocatalysis" evidence="4">
    <location>
        <position position="192"/>
    </location>
</feature>
<feature type="mutagenesis site" description="Complete loss of metal binding." evidence="9">
    <original>H</original>
    <variation>Y</variation>
    <location>
        <position position="78"/>
    </location>
</feature>
<feature type="non-terminal residue">
    <location>
        <position position="1"/>
    </location>
</feature>
<feature type="strand" evidence="14">
    <location>
        <begin position="82"/>
        <end position="86"/>
    </location>
</feature>
<feature type="strand" evidence="14">
    <location>
        <begin position="91"/>
        <end position="95"/>
    </location>
</feature>
<feature type="helix" evidence="14">
    <location>
        <begin position="97"/>
        <end position="103"/>
    </location>
</feature>
<feature type="helix" evidence="14">
    <location>
        <begin position="107"/>
        <end position="109"/>
    </location>
</feature>
<feature type="turn" evidence="14">
    <location>
        <begin position="110"/>
        <end position="112"/>
    </location>
</feature>
<feature type="helix" evidence="14">
    <location>
        <begin position="115"/>
        <end position="118"/>
    </location>
</feature>
<feature type="turn" evidence="14">
    <location>
        <begin position="122"/>
        <end position="124"/>
    </location>
</feature>
<feature type="helix" evidence="14">
    <location>
        <begin position="127"/>
        <end position="129"/>
    </location>
</feature>
<feature type="turn" evidence="14">
    <location>
        <begin position="130"/>
        <end position="132"/>
    </location>
</feature>
<feature type="strand" evidence="14">
    <location>
        <begin position="137"/>
        <end position="140"/>
    </location>
</feature>
<feature type="strand" evidence="14">
    <location>
        <begin position="148"/>
        <end position="157"/>
    </location>
</feature>
<feature type="strand" evidence="14">
    <location>
        <begin position="163"/>
        <end position="172"/>
    </location>
</feature>
<gene>
    <name type="primary">walK</name>
    <name type="synonym">vicK</name>
    <name type="synonym">yycG</name>
</gene>
<evidence type="ECO:0000250" key="1">
    <source>
        <dbReference type="UniProtKB" id="Q2G2U4"/>
    </source>
</evidence>
<evidence type="ECO:0000255" key="2"/>
<evidence type="ECO:0000255" key="3">
    <source>
        <dbReference type="PROSITE-ProRule" id="PRU00102"/>
    </source>
</evidence>
<evidence type="ECO:0000255" key="4">
    <source>
        <dbReference type="PROSITE-ProRule" id="PRU00107"/>
    </source>
</evidence>
<evidence type="ECO:0000255" key="5">
    <source>
        <dbReference type="PROSITE-ProRule" id="PRU00140"/>
    </source>
</evidence>
<evidence type="ECO:0000255" key="6">
    <source>
        <dbReference type="PROSITE-ProRule" id="PRU00141"/>
    </source>
</evidence>
<evidence type="ECO:0000269" key="7">
    <source>
    </source>
</evidence>
<evidence type="ECO:0000269" key="8">
    <source>
    </source>
</evidence>
<evidence type="ECO:0000269" key="9">
    <source>
    </source>
</evidence>
<evidence type="ECO:0000269" key="10">
    <source ref="5"/>
</evidence>
<evidence type="ECO:0000305" key="11"/>
<evidence type="ECO:0007744" key="12">
    <source>
        <dbReference type="PDB" id="4MN5"/>
    </source>
</evidence>
<evidence type="ECO:0007744" key="13">
    <source>
        <dbReference type="PDB" id="4MN6"/>
    </source>
</evidence>
<evidence type="ECO:0007829" key="14">
    <source>
        <dbReference type="PDB" id="4MN5"/>
    </source>
</evidence>
<proteinExistence type="evidence at protein level"/>
<reference key="1">
    <citation type="journal article" date="2002" name="Infect. Immun.">
        <title>Genetic analysis and functional characterization of the Streptococcus pneumoniae vic operon.</title>
        <authorList>
            <person name="Wagner C."/>
            <person name="de Saizieu A."/>
            <person name="Schoenfeld H.-J."/>
            <person name="Kamber M."/>
            <person name="Lange R."/>
            <person name="Thompson C.J."/>
            <person name="Page M.G."/>
        </authorList>
    </citation>
    <scope>NUCLEOTIDE SEQUENCE [GENOMIC DNA]</scope>
</reference>
<reference key="2">
    <citation type="journal article" date="2003" name="J. Mol. Microbiol. Biotechnol.">
        <title>Biochemical characterization of the first essential two-component signal transduction system from Staphylococcus aureus and Streptococcus pneumoniae.</title>
        <authorList>
            <person name="Clausen V.A."/>
            <person name="Bae W."/>
            <person name="Throup J."/>
            <person name="Burnham M.K.R."/>
            <person name="Rosenberg M."/>
            <person name="Wallis N.G."/>
        </authorList>
    </citation>
    <scope>BIOPHYSICOCHEMICAL PROPERTIES</scope>
    <scope>COFACTOR</scope>
    <scope>AUTOPHOSPHORYLATION</scope>
    <source>
        <strain>WCUH29 / NCIMB 40771</strain>
    </source>
</reference>
<reference key="3">
    <citation type="journal article" date="2007" name="Int. J. Med. Microbiol.">
        <title>Role of insertion elements and yycFG in the development of decreased susceptibility to vancomycin in Staphylococcus aureus.</title>
        <authorList>
            <person name="Jansen A."/>
            <person name="Tuerck M."/>
            <person name="Szekat C."/>
            <person name="Nagel M."/>
            <person name="Clever I."/>
            <person name="Bierbaum G."/>
        </authorList>
    </citation>
    <scope>OVEREXPRESSION</scope>
    <source>
        <strain>SA137/93A</strain>
    </source>
</reference>
<reference key="4">
    <citation type="journal article" date="2019" name="Nat. Commun.">
        <title>Zinc-binding to the cytoplasmic PAS domain regulates the essential WalK histidine kinase of Staphylococcus aureus.</title>
        <authorList>
            <person name="Monk I.R."/>
            <person name="Shaikh N."/>
            <person name="Begg S.L."/>
            <person name="Gajdiss M."/>
            <person name="Sharkey L.K.R."/>
            <person name="Lee J.Y.H."/>
            <person name="Pidot S.J."/>
            <person name="Seemann T."/>
            <person name="Kuiper M."/>
            <person name="Winnen B."/>
            <person name="Hvorup R."/>
            <person name="Collins B.M."/>
            <person name="Bierbaum G."/>
            <person name="Udagedara S.R."/>
            <person name="Morey J.R."/>
            <person name="Pulyani N."/>
            <person name="Howden B.P."/>
            <person name="Maher M.J."/>
            <person name="McDevitt C.A."/>
            <person name="King G.F."/>
            <person name="Stinear T.P."/>
        </authorList>
    </citation>
    <scope>FUNCTION</scope>
    <scope>CATALYTIC ACTIVITY</scope>
    <scope>ACTIVITY REGULATION</scope>
    <scope>MUTAGENESIS OF HIS-78</scope>
    <scope>AUTOPHOSPHORYLATION</scope>
</reference>
<reference evidence="12 13" key="5">
    <citation type="submission" date="2013-09" db="PDB data bank">
        <title>Crystal structure of PAS domain of S. aureus YycG.</title>
        <authorList>
            <person name="Shaikh N."/>
            <person name="Hvorup R."/>
            <person name="Winnen B."/>
            <person name="Collins B.M."/>
            <person name="King G.F."/>
        </authorList>
    </citation>
    <scope>X-RAY CRYSTALLOGRAPHY (2.00 ANGSTROMS) OF 58-183 IN COMPLEX WITH ZINC</scope>
</reference>
<protein>
    <recommendedName>
        <fullName evidence="11">Sensor protein kinase WalK</fullName>
        <ecNumber evidence="9">2.7.13.3</ecNumber>
    </recommendedName>
</protein>